<dbReference type="EC" id="2.7.2.2" evidence="1"/>
<dbReference type="EMBL" id="U82664">
    <property type="protein sequence ID" value="AAB40273.1"/>
    <property type="molecule type" value="Genomic_DNA"/>
</dbReference>
<dbReference type="EMBL" id="U00096">
    <property type="protein sequence ID" value="AAC73623.1"/>
    <property type="molecule type" value="Genomic_DNA"/>
</dbReference>
<dbReference type="EMBL" id="AP009048">
    <property type="protein sequence ID" value="BAE76298.1"/>
    <property type="molecule type" value="Genomic_DNA"/>
</dbReference>
<dbReference type="EMBL" id="M19657">
    <property type="status" value="NOT_ANNOTATED_CDS"/>
    <property type="molecule type" value="Genomic_DNA"/>
</dbReference>
<dbReference type="EMBL" id="X12982">
    <property type="status" value="NOT_ANNOTATED_CDS"/>
    <property type="molecule type" value="Genomic_DNA"/>
</dbReference>
<dbReference type="PIR" id="H64783">
    <property type="entry name" value="H64783"/>
</dbReference>
<dbReference type="RefSeq" id="NP_415054.1">
    <property type="nucleotide sequence ID" value="NC_000913.3"/>
</dbReference>
<dbReference type="RefSeq" id="WP_000855379.1">
    <property type="nucleotide sequence ID" value="NZ_LN832404.1"/>
</dbReference>
<dbReference type="SMR" id="P37306"/>
<dbReference type="BioGRID" id="4262013">
    <property type="interactions" value="6"/>
</dbReference>
<dbReference type="FunCoup" id="P37306">
    <property type="interactions" value="395"/>
</dbReference>
<dbReference type="IntAct" id="P37306">
    <property type="interactions" value="3"/>
</dbReference>
<dbReference type="STRING" id="511145.b0521"/>
<dbReference type="PaxDb" id="511145-b0521"/>
<dbReference type="EnsemblBacteria" id="AAC73623">
    <property type="protein sequence ID" value="AAC73623"/>
    <property type="gene ID" value="b0521"/>
</dbReference>
<dbReference type="GeneID" id="944972"/>
<dbReference type="KEGG" id="ecj:JW0510"/>
<dbReference type="KEGG" id="eco:b0521"/>
<dbReference type="KEGG" id="ecoc:C3026_02555"/>
<dbReference type="PATRIC" id="fig|1411691.4.peg.1757"/>
<dbReference type="EchoBASE" id="EB2285"/>
<dbReference type="eggNOG" id="COG0549">
    <property type="taxonomic scope" value="Bacteria"/>
</dbReference>
<dbReference type="HOGENOM" id="CLU_076278_0_1_6"/>
<dbReference type="InParanoid" id="P37306"/>
<dbReference type="OMA" id="EANNWIM"/>
<dbReference type="OrthoDB" id="9766717at2"/>
<dbReference type="PhylomeDB" id="P37306"/>
<dbReference type="BioCyc" id="EcoCyc:EG12384-MONOMER"/>
<dbReference type="SABIO-RK" id="P37306"/>
<dbReference type="UniPathway" id="UPA00395"/>
<dbReference type="PRO" id="PR:P37306"/>
<dbReference type="Proteomes" id="UP000000625">
    <property type="component" value="Chromosome"/>
</dbReference>
<dbReference type="GO" id="GO:0005829">
    <property type="term" value="C:cytosol"/>
    <property type="evidence" value="ECO:0000318"/>
    <property type="project" value="GO_Central"/>
</dbReference>
<dbReference type="GO" id="GO:0005524">
    <property type="term" value="F:ATP binding"/>
    <property type="evidence" value="ECO:0007669"/>
    <property type="project" value="UniProtKB-KW"/>
</dbReference>
<dbReference type="GO" id="GO:0008804">
    <property type="term" value="F:carbamate kinase activity"/>
    <property type="evidence" value="ECO:0000266"/>
    <property type="project" value="EcoCyc"/>
</dbReference>
<dbReference type="GO" id="GO:0019546">
    <property type="term" value="P:arginine deiminase pathway"/>
    <property type="evidence" value="ECO:0000318"/>
    <property type="project" value="GO_Central"/>
</dbReference>
<dbReference type="CDD" id="cd04235">
    <property type="entry name" value="AAK_CK"/>
    <property type="match status" value="1"/>
</dbReference>
<dbReference type="FunFam" id="3.40.1160.10:FF:000007">
    <property type="entry name" value="Carbamate kinase"/>
    <property type="match status" value="1"/>
</dbReference>
<dbReference type="Gene3D" id="3.40.1160.10">
    <property type="entry name" value="Acetylglutamate kinase-like"/>
    <property type="match status" value="1"/>
</dbReference>
<dbReference type="InterPro" id="IPR036393">
    <property type="entry name" value="AceGlu_kinase-like_sf"/>
</dbReference>
<dbReference type="InterPro" id="IPR001048">
    <property type="entry name" value="Asp/Glu/Uridylate_kinase"/>
</dbReference>
<dbReference type="InterPro" id="IPR003964">
    <property type="entry name" value="Carb_kinase"/>
</dbReference>
<dbReference type="NCBIfam" id="TIGR00746">
    <property type="entry name" value="arcC"/>
    <property type="match status" value="1"/>
</dbReference>
<dbReference type="NCBIfam" id="NF006926">
    <property type="entry name" value="PRK09411.1"/>
    <property type="match status" value="1"/>
</dbReference>
<dbReference type="NCBIfam" id="NF009008">
    <property type="entry name" value="PRK12354.1"/>
    <property type="match status" value="1"/>
</dbReference>
<dbReference type="PANTHER" id="PTHR30409">
    <property type="entry name" value="CARBAMATE KINASE"/>
    <property type="match status" value="1"/>
</dbReference>
<dbReference type="PANTHER" id="PTHR30409:SF1">
    <property type="entry name" value="CARBAMATE KINASE-RELATED"/>
    <property type="match status" value="1"/>
</dbReference>
<dbReference type="Pfam" id="PF00696">
    <property type="entry name" value="AA_kinase"/>
    <property type="match status" value="1"/>
</dbReference>
<dbReference type="PIRSF" id="PIRSF000723">
    <property type="entry name" value="Carbamate_kin"/>
    <property type="match status" value="1"/>
</dbReference>
<dbReference type="PRINTS" id="PR01469">
    <property type="entry name" value="CARBMTKINASE"/>
</dbReference>
<dbReference type="SUPFAM" id="SSF53633">
    <property type="entry name" value="Carbamate kinase-like"/>
    <property type="match status" value="1"/>
</dbReference>
<proteinExistence type="evidence at protein level"/>
<reference key="1">
    <citation type="submission" date="1997-01" db="EMBL/GenBank/DDBJ databases">
        <title>Sequence of minutes 4-25 of Escherichia coli.</title>
        <authorList>
            <person name="Chung E."/>
            <person name="Allen E."/>
            <person name="Araujo R."/>
            <person name="Aparicio A.M."/>
            <person name="Davis K."/>
            <person name="Duncan M."/>
            <person name="Federspiel N."/>
            <person name="Hyman R."/>
            <person name="Kalman S."/>
            <person name="Komp C."/>
            <person name="Kurdi O."/>
            <person name="Lew H."/>
            <person name="Lin D."/>
            <person name="Namath A."/>
            <person name="Oefner P."/>
            <person name="Roberts D."/>
            <person name="Schramm S."/>
            <person name="Davis R.W."/>
        </authorList>
    </citation>
    <scope>NUCLEOTIDE SEQUENCE [LARGE SCALE GENOMIC DNA]</scope>
    <source>
        <strain>K12 / MG1655 / ATCC 47076</strain>
    </source>
</reference>
<reference key="2">
    <citation type="journal article" date="1997" name="Science">
        <title>The complete genome sequence of Escherichia coli K-12.</title>
        <authorList>
            <person name="Blattner F.R."/>
            <person name="Plunkett G. III"/>
            <person name="Bloch C.A."/>
            <person name="Perna N.T."/>
            <person name="Burland V."/>
            <person name="Riley M."/>
            <person name="Collado-Vides J."/>
            <person name="Glasner J.D."/>
            <person name="Rode C.K."/>
            <person name="Mayhew G.F."/>
            <person name="Gregor J."/>
            <person name="Davis N.W."/>
            <person name="Kirkpatrick H.A."/>
            <person name="Goeden M.A."/>
            <person name="Rose D.J."/>
            <person name="Mau B."/>
            <person name="Shao Y."/>
        </authorList>
    </citation>
    <scope>NUCLEOTIDE SEQUENCE [LARGE SCALE GENOMIC DNA]</scope>
    <source>
        <strain>K12 / MG1655 / ATCC 47076</strain>
    </source>
</reference>
<reference key="3">
    <citation type="journal article" date="2006" name="Mol. Syst. Biol.">
        <title>Highly accurate genome sequences of Escherichia coli K-12 strains MG1655 and W3110.</title>
        <authorList>
            <person name="Hayashi K."/>
            <person name="Morooka N."/>
            <person name="Yamamoto Y."/>
            <person name="Fujita K."/>
            <person name="Isono K."/>
            <person name="Choi S."/>
            <person name="Ohtsubo E."/>
            <person name="Baba T."/>
            <person name="Wanner B.L."/>
            <person name="Mori H."/>
            <person name="Horiuchi T."/>
        </authorList>
    </citation>
    <scope>NUCLEOTIDE SEQUENCE [LARGE SCALE GENOMIC DNA]</scope>
    <source>
        <strain>K12 / W3110 / ATCC 27325 / DSM 5911</strain>
    </source>
</reference>
<reference key="4">
    <citation type="journal article" date="1989" name="J. Bacteriol.">
        <title>Identification and sequence analysis of Escherichia coli purE and purK genes encoding 5'-phosphoribosyl-5-amino-4-imidazole carboxylase for de novo purine biosynthesis.</title>
        <authorList>
            <person name="Watanabe W."/>
            <person name="Sampei G."/>
            <person name="Aiba A."/>
            <person name="Mizobuchi K."/>
        </authorList>
    </citation>
    <scope>NUCLEOTIDE SEQUENCE [GENOMIC DNA] OF 203-297</scope>
</reference>
<reference key="5">
    <citation type="journal article" date="1989" name="J. Bacteriol.">
        <title>Nucleotide sequence analysis of the purEK operon encoding 5'-phosphoribosyl-5-aminoimidazole carboxylase of Escherichia coli K-12.</title>
        <authorList>
            <person name="Tiedeman A.A."/>
            <person name="Keyhani J."/>
            <person name="Kamholz J."/>
            <person name="Daum H.A. III"/>
            <person name="Gots J.S."/>
            <person name="Smith J.M."/>
        </authorList>
    </citation>
    <scope>NUCLEOTIDE SEQUENCE [GENOMIC DNA] OF 203-297</scope>
    <source>
        <strain>K12</strain>
    </source>
</reference>
<reference key="6">
    <citation type="journal article" date="1994" name="Trends Biochem. Sci.">
        <title>New genes in old sequence: a strategy for finding genes in the bacterial genome.</title>
        <authorList>
            <person name="Borodovsky M."/>
            <person name="Koonin E.V."/>
            <person name="Rudd K.E."/>
        </authorList>
    </citation>
    <scope>IDENTIFICATION</scope>
</reference>
<reference key="7">
    <citation type="journal article" date="1994" name="Nucleic Acids Res.">
        <title>Intrinsic and extrinsic approaches for detecting genes in a bacterial genome.</title>
        <authorList>
            <person name="Borodovsky M."/>
            <person name="Rudd K.E."/>
            <person name="Koonin E.V."/>
        </authorList>
    </citation>
    <scope>IDENTIFICATION</scope>
</reference>
<reference key="8">
    <citation type="journal article" date="1994" name="Nat. Genet.">
        <title>Large scale bacterial gene discovery by similarity search.</title>
        <authorList>
            <person name="Robison K."/>
            <person name="Gilbert W."/>
            <person name="Church G.M."/>
        </authorList>
    </citation>
    <scope>IDENTIFICATION</scope>
</reference>
<reference key="9">
    <citation type="journal article" date="2022" name="J. Microbiol. Biotechnol.">
        <title>The ybcF Gene of Escherichia coli Encodes a Local Orphan Enzyme, Catabolic Carbamate Kinase.</title>
        <authorList>
            <person name="Kim N.Y."/>
            <person name="Kim O.B."/>
        </authorList>
    </citation>
    <scope>FUNCTION</scope>
    <scope>CATALYTIC ACTIVITY</scope>
    <scope>BIOPHYSICOCHEMICAL PROPERTIES</scope>
    <scope>INDUCTION</scope>
    <scope>DISRUPTION PHENOTYPE</scope>
    <source>
        <strain>K12 / MG1655 / ATCC 47076</strain>
    </source>
</reference>
<comment type="function">
    <text evidence="1">Kinase involved in the anaerobic nitrogen utilization via the assimilation of allantoin (PubMed:36384810). Catalyzes the transfer of a phosphate group from carbamoyl phosphate to ADP to produce ATP and leave carbamate, which spontaneously hydrolyzes to ammonia and hydrogencarbonate (PubMed:36384810).</text>
</comment>
<comment type="catalytic activity">
    <reaction evidence="1">
        <text>hydrogencarbonate + NH4(+) + ATP = carbamoyl phosphate + ADP + H2O + H(+)</text>
        <dbReference type="Rhea" id="RHEA:10152"/>
        <dbReference type="ChEBI" id="CHEBI:15377"/>
        <dbReference type="ChEBI" id="CHEBI:15378"/>
        <dbReference type="ChEBI" id="CHEBI:17544"/>
        <dbReference type="ChEBI" id="CHEBI:28938"/>
        <dbReference type="ChEBI" id="CHEBI:30616"/>
        <dbReference type="ChEBI" id="CHEBI:58228"/>
        <dbReference type="ChEBI" id="CHEBI:456216"/>
        <dbReference type="EC" id="2.7.2.2"/>
    </reaction>
    <physiologicalReaction direction="right-to-left" evidence="1">
        <dbReference type="Rhea" id="RHEA:10154"/>
    </physiologicalReaction>
</comment>
<comment type="catalytic activity">
    <reaction evidence="6">
        <text>carbamate + ATP = carbamoyl phosphate + ADP</text>
        <dbReference type="Rhea" id="RHEA:30755"/>
        <dbReference type="ChEBI" id="CHEBI:13941"/>
        <dbReference type="ChEBI" id="CHEBI:30616"/>
        <dbReference type="ChEBI" id="CHEBI:58228"/>
        <dbReference type="ChEBI" id="CHEBI:456216"/>
    </reaction>
    <physiologicalReaction direction="right-to-left" evidence="6">
        <dbReference type="Rhea" id="RHEA:30757"/>
    </physiologicalReaction>
</comment>
<comment type="catalytic activity">
    <reaction evidence="6">
        <text>hydrogencarbonate + NH4(+) = carbamate + H2O + H(+)</text>
        <dbReference type="Rhea" id="RHEA:57716"/>
        <dbReference type="ChEBI" id="CHEBI:13941"/>
        <dbReference type="ChEBI" id="CHEBI:15377"/>
        <dbReference type="ChEBI" id="CHEBI:15378"/>
        <dbReference type="ChEBI" id="CHEBI:17544"/>
        <dbReference type="ChEBI" id="CHEBI:28938"/>
    </reaction>
    <physiologicalReaction direction="right-to-left" evidence="6">
        <dbReference type="Rhea" id="RHEA:57718"/>
    </physiologicalReaction>
</comment>
<comment type="biophysicochemical properties">
    <kinetics>
        <KM evidence="1">0.47 mM for carbamoyl phosphate (at 28 degrees Celsius and pH 8)</KM>
        <KM evidence="1">0.43 mM for ADP (at 28 degrees Celsius and pH 8)</KM>
        <Vmax evidence="1">1.82 umol/min/mg enzyme toward carbamoyl phosphate (at 28 degrees Celsius and pH 8)</Vmax>
        <Vmax evidence="1">1.94 umol/min/mg enzyme toward ADP (at 28 degrees Celsius and pH 8)</Vmax>
    </kinetics>
    <phDependence>
        <text evidence="1">There is no significant difference at pH 6, 7 and 8.</text>
    </phDependence>
    <temperatureDependence>
        <text evidence="1">Optimum temperature is 28 degrees Celsius (PubMed:36384810). Activity is twice as high at 28 degrees Celsius than at 37 degrees Celsius (PubMed:36384810).</text>
    </temperatureDependence>
</comment>
<comment type="pathway">
    <text evidence="6">Nitrogen metabolism; (S)-allantoin degradation.</text>
</comment>
<comment type="subcellular location">
    <subcellularLocation>
        <location evidence="5">Cytoplasm</location>
    </subcellularLocation>
</comment>
<comment type="induction">
    <text evidence="1">Cotranscribed with allF, allG and allH genes, which encode the oxamate carbamoyltransferase (PubMed:36384810). Expressed under allantoin degradation conditions (PubMed:36384810).</text>
</comment>
<comment type="disruption phenotype">
    <text evidence="1">Deletion of the gene does not affect allantoin degradation and causes only a slight increase in metabolic flow into the glyoxylate pathway, probably because carbamoyl phosphate is used to de novo synthesize pyrimidine and arginine.</text>
</comment>
<comment type="similarity">
    <text evidence="5">Belongs to the carbamate kinase family.</text>
</comment>
<sequence>MKTLVVALGGNALLQRGEALTAENQYRNIASAVPALARLARSYRLAIVHGNGPQVGLLALQNLAWKEVEPYPLDVLVAESQGMIGYMLAQSLSAQPQMPPVTTVLTRIEVSPDDPAFLQPEKFIGPVYQPEEQEALEAAYGWQMKRDGKYLRRVVASPQPRKILDSEAIELLLKEGHVVICSGGGGVPVTDDGAGSEAVIDKDLAAALLAEQINADGLVILTDADAVYENWGTPQQRAIRHATPDELAPFAKADGSMGPNVTAVSGYVRSRGKPAWIGALSRIEETLAGEAGTCISL</sequence>
<evidence type="ECO:0000269" key="1">
    <source>
    </source>
</evidence>
<evidence type="ECO:0000303" key="2">
    <source>
    </source>
</evidence>
<evidence type="ECO:0000303" key="3">
    <source>
    </source>
</evidence>
<evidence type="ECO:0000303" key="4">
    <source>
    </source>
</evidence>
<evidence type="ECO:0000305" key="5"/>
<evidence type="ECO:0000305" key="6">
    <source>
    </source>
</evidence>
<organism>
    <name type="scientific">Escherichia coli (strain K12)</name>
    <dbReference type="NCBI Taxonomy" id="83333"/>
    <lineage>
        <taxon>Bacteria</taxon>
        <taxon>Pseudomonadati</taxon>
        <taxon>Pseudomonadota</taxon>
        <taxon>Gammaproteobacteria</taxon>
        <taxon>Enterobacterales</taxon>
        <taxon>Enterobacteriaceae</taxon>
        <taxon>Escherichia</taxon>
    </lineage>
</organism>
<protein>
    <recommendedName>
        <fullName evidence="2">Carbamate kinase</fullName>
        <ecNumber evidence="1">2.7.2.2</ecNumber>
    </recommendedName>
    <alternativeName>
        <fullName evidence="2">Catabolic carbamate kinase</fullName>
        <shortName evidence="2">Catabolic CK</shortName>
    </alternativeName>
</protein>
<name>ALLK_ECOLI</name>
<keyword id="KW-0067">ATP-binding</keyword>
<keyword id="KW-0963">Cytoplasm</keyword>
<keyword id="KW-0418">Kinase</keyword>
<keyword id="KW-0547">Nucleotide-binding</keyword>
<keyword id="KW-1185">Reference proteome</keyword>
<keyword id="KW-0808">Transferase</keyword>
<feature type="chain" id="PRO_0000185119" description="Carbamate kinase">
    <location>
        <begin position="1"/>
        <end position="297"/>
    </location>
</feature>
<feature type="sequence conflict" description="In Ref. 5; X12982." evidence="5" ref="5">
    <original>ALSRIEETLAGEAGTCISL</original>
    <variation>RYRELKRRWRAKRGPVFRCSRRH</variation>
    <location>
        <begin position="279"/>
        <end position="297"/>
    </location>
</feature>
<gene>
    <name evidence="2" type="primary">allK</name>
    <name type="synonym">arcC</name>
    <name evidence="3 4" type="synonym">ybcF</name>
    <name type="ordered locus">b0521</name>
    <name type="ordered locus">JW0510</name>
</gene>
<accession>P37306</accession>
<accession>P77419</accession>
<accession>Q2MBQ8</accession>